<comment type="function">
    <text evidence="1">Specifically catalyzes the 21-hydroxylation of steroids. Required for the adrenal synthesis of mineralocorticoids and glucocorticoids.</text>
</comment>
<comment type="catalytic activity">
    <reaction evidence="1">
        <text>17alpha-hydroxyprogesterone + reduced [NADPH--hemoprotein reductase] + O2 = 11-deoxycortisol + oxidized [NADPH--hemoprotein reductase] + H2O + H(+)</text>
        <dbReference type="Rhea" id="RHEA:50308"/>
        <dbReference type="Rhea" id="RHEA-COMP:11964"/>
        <dbReference type="Rhea" id="RHEA-COMP:11965"/>
        <dbReference type="ChEBI" id="CHEBI:15377"/>
        <dbReference type="ChEBI" id="CHEBI:15378"/>
        <dbReference type="ChEBI" id="CHEBI:15379"/>
        <dbReference type="ChEBI" id="CHEBI:17252"/>
        <dbReference type="ChEBI" id="CHEBI:28324"/>
        <dbReference type="ChEBI" id="CHEBI:57618"/>
        <dbReference type="ChEBI" id="CHEBI:58210"/>
        <dbReference type="EC" id="1.14.14.16"/>
    </reaction>
</comment>
<comment type="catalytic activity">
    <reaction evidence="1">
        <text>progesterone + reduced [NADPH--hemoprotein reductase] + O2 = 21-hydroxyprogesterone + oxidized [NADPH--hemoprotein reductase] + H2O + H(+)</text>
        <dbReference type="Rhea" id="RHEA:50304"/>
        <dbReference type="Rhea" id="RHEA-COMP:11964"/>
        <dbReference type="Rhea" id="RHEA-COMP:11965"/>
        <dbReference type="ChEBI" id="CHEBI:15377"/>
        <dbReference type="ChEBI" id="CHEBI:15378"/>
        <dbReference type="ChEBI" id="CHEBI:15379"/>
        <dbReference type="ChEBI" id="CHEBI:16973"/>
        <dbReference type="ChEBI" id="CHEBI:17026"/>
        <dbReference type="ChEBI" id="CHEBI:57618"/>
        <dbReference type="ChEBI" id="CHEBI:58210"/>
        <dbReference type="EC" id="1.14.14.16"/>
    </reaction>
</comment>
<comment type="cofactor">
    <cofactor evidence="1">
        <name>heme b</name>
        <dbReference type="ChEBI" id="CHEBI:60344"/>
    </cofactor>
</comment>
<comment type="subcellular location">
    <subcellularLocation>
        <location>Endoplasmic reticulum membrane</location>
        <topology>Peripheral membrane protein</topology>
    </subcellularLocation>
    <subcellularLocation>
        <location>Microsome membrane</location>
        <topology>Peripheral membrane protein</topology>
    </subcellularLocation>
</comment>
<comment type="domain">
    <text>The leucine-rich hydrophobic amino acid N-terminal region probably helps to anchor the protein to the microsomal membrane.</text>
</comment>
<comment type="similarity">
    <text evidence="3">Belongs to the cytochrome P450 family.</text>
</comment>
<keyword id="KW-0256">Endoplasmic reticulum</keyword>
<keyword id="KW-0349">Heme</keyword>
<keyword id="KW-0408">Iron</keyword>
<keyword id="KW-0446">Lipid-binding</keyword>
<keyword id="KW-0472">Membrane</keyword>
<keyword id="KW-0479">Metal-binding</keyword>
<keyword id="KW-0492">Microsome</keyword>
<keyword id="KW-0503">Monooxygenase</keyword>
<keyword id="KW-0560">Oxidoreductase</keyword>
<keyword id="KW-1185">Reference proteome</keyword>
<keyword id="KW-0754">Steroid-binding</keyword>
<keyword id="KW-0755">Steroidogenesis</keyword>
<feature type="chain" id="PRO_0000269710" description="Steroid 21-hydroxylase">
    <location>
        <begin position="1"/>
        <end position="492"/>
    </location>
</feature>
<feature type="binding site" evidence="2">
    <location>
        <position position="91"/>
    </location>
    <ligand>
        <name>heme b</name>
        <dbReference type="ChEBI" id="CHEBI:60344"/>
    </ligand>
</feature>
<feature type="binding site" evidence="2">
    <location>
        <position position="120"/>
    </location>
    <ligand>
        <name>heme b</name>
        <dbReference type="ChEBI" id="CHEBI:60344"/>
    </ligand>
</feature>
<feature type="binding site" evidence="1">
    <location>
        <position position="231"/>
    </location>
    <ligand>
        <name>17alpha-hydroxyprogesterone</name>
        <dbReference type="ChEBI" id="CHEBI:17252"/>
    </ligand>
</feature>
<feature type="binding site" evidence="2">
    <location>
        <position position="231"/>
    </location>
    <ligand>
        <name>progesterone</name>
        <dbReference type="ChEBI" id="CHEBI:17026"/>
    </ligand>
</feature>
<feature type="binding site" evidence="2">
    <location>
        <position position="363"/>
    </location>
    <ligand>
        <name>heme b</name>
        <dbReference type="ChEBI" id="CHEBI:60344"/>
    </ligand>
</feature>
<feature type="binding site" evidence="2">
    <location>
        <position position="424"/>
    </location>
    <ligand>
        <name>heme b</name>
        <dbReference type="ChEBI" id="CHEBI:60344"/>
    </ligand>
</feature>
<feature type="binding site" description="axial binding residue" evidence="2">
    <location>
        <position position="426"/>
    </location>
    <ligand>
        <name>heme b</name>
        <dbReference type="ChEBI" id="CHEBI:60344"/>
    </ligand>
    <ligandPart>
        <name>Fe</name>
        <dbReference type="ChEBI" id="CHEBI:18248"/>
    </ligandPart>
</feature>
<evidence type="ECO:0000250" key="1">
    <source>
        <dbReference type="UniProtKB" id="P00191"/>
    </source>
</evidence>
<evidence type="ECO:0000250" key="2">
    <source>
        <dbReference type="UniProtKB" id="P08686"/>
    </source>
</evidence>
<evidence type="ECO:0000305" key="3"/>
<protein>
    <recommendedName>
        <fullName>Steroid 21-hydroxylase</fullName>
        <ecNumber evidence="1">1.14.14.16</ecNumber>
    </recommendedName>
    <alternativeName>
        <fullName>21-OHase</fullName>
    </alternativeName>
    <alternativeName>
        <fullName>Cytochrome P-450c21</fullName>
    </alternativeName>
    <alternativeName>
        <fullName>Cytochrome P450 21</fullName>
    </alternativeName>
    <alternativeName>
        <fullName>Cytochrome P450 XXI</fullName>
    </alternativeName>
    <alternativeName>
        <fullName>Cytochrome P450-C21</fullName>
    </alternativeName>
</protein>
<proteinExistence type="inferred from homology"/>
<dbReference type="EC" id="1.14.14.16" evidence="1"/>
<dbReference type="EMBL" id="DQ341429">
    <property type="protein sequence ID" value="ABC69211.1"/>
    <property type="molecule type" value="Genomic_DNA"/>
</dbReference>
<dbReference type="RefSeq" id="XP_003986007.1">
    <property type="nucleotide sequence ID" value="XM_003985958.4"/>
</dbReference>
<dbReference type="SMR" id="Q2LA60"/>
<dbReference type="FunCoup" id="Q2LA60">
    <property type="interactions" value="8"/>
</dbReference>
<dbReference type="STRING" id="9685.ENSFCAP00000004176"/>
<dbReference type="PaxDb" id="9685-ENSFCAP00000004176"/>
<dbReference type="GeneID" id="101094596"/>
<dbReference type="KEGG" id="fca:101094596"/>
<dbReference type="CTD" id="1589"/>
<dbReference type="eggNOG" id="KOG0156">
    <property type="taxonomic scope" value="Eukaryota"/>
</dbReference>
<dbReference type="HOGENOM" id="CLU_001570_22_0_1"/>
<dbReference type="InParanoid" id="Q2LA60"/>
<dbReference type="OrthoDB" id="2789670at2759"/>
<dbReference type="TreeFam" id="TF105095"/>
<dbReference type="Proteomes" id="UP000011712">
    <property type="component" value="Unplaced"/>
</dbReference>
<dbReference type="GO" id="GO:0005789">
    <property type="term" value="C:endoplasmic reticulum membrane"/>
    <property type="evidence" value="ECO:0007669"/>
    <property type="project" value="UniProtKB-SubCell"/>
</dbReference>
<dbReference type="GO" id="GO:0103069">
    <property type="term" value="F:17-hydroxyprogesterone 21-hydroxylase activity"/>
    <property type="evidence" value="ECO:0007669"/>
    <property type="project" value="RHEA"/>
</dbReference>
<dbReference type="GO" id="GO:0020037">
    <property type="term" value="F:heme binding"/>
    <property type="evidence" value="ECO:0000318"/>
    <property type="project" value="GO_Central"/>
</dbReference>
<dbReference type="GO" id="GO:0005506">
    <property type="term" value="F:iron ion binding"/>
    <property type="evidence" value="ECO:0007669"/>
    <property type="project" value="InterPro"/>
</dbReference>
<dbReference type="GO" id="GO:0106309">
    <property type="term" value="F:progesterone 21-hydroxylase activity"/>
    <property type="evidence" value="ECO:0007669"/>
    <property type="project" value="RHEA"/>
</dbReference>
<dbReference type="GO" id="GO:0004509">
    <property type="term" value="F:steroid 21-monooxygenase activity"/>
    <property type="evidence" value="ECO:0000318"/>
    <property type="project" value="GO_Central"/>
</dbReference>
<dbReference type="GO" id="GO:0005496">
    <property type="term" value="F:steroid binding"/>
    <property type="evidence" value="ECO:0007669"/>
    <property type="project" value="UniProtKB-KW"/>
</dbReference>
<dbReference type="GO" id="GO:0008395">
    <property type="term" value="F:steroid hydroxylase activity"/>
    <property type="evidence" value="ECO:0000250"/>
    <property type="project" value="UniProtKB"/>
</dbReference>
<dbReference type="GO" id="GO:0006704">
    <property type="term" value="P:glucocorticoid biosynthetic process"/>
    <property type="evidence" value="ECO:0000318"/>
    <property type="project" value="GO_Central"/>
</dbReference>
<dbReference type="GO" id="GO:0008202">
    <property type="term" value="P:steroid metabolic process"/>
    <property type="evidence" value="ECO:0000250"/>
    <property type="project" value="UniProtKB"/>
</dbReference>
<dbReference type="CDD" id="cd20674">
    <property type="entry name" value="CYP21"/>
    <property type="match status" value="1"/>
</dbReference>
<dbReference type="FunFam" id="1.10.630.10:FF:000049">
    <property type="entry name" value="steroid 21-hydroxylase isoform X1"/>
    <property type="match status" value="1"/>
</dbReference>
<dbReference type="Gene3D" id="1.10.630.10">
    <property type="entry name" value="Cytochrome P450"/>
    <property type="match status" value="1"/>
</dbReference>
<dbReference type="InterPro" id="IPR001128">
    <property type="entry name" value="Cyt_P450"/>
</dbReference>
<dbReference type="InterPro" id="IPR017972">
    <property type="entry name" value="Cyt_P450_CS"/>
</dbReference>
<dbReference type="InterPro" id="IPR002401">
    <property type="entry name" value="Cyt_P450_E_grp-I"/>
</dbReference>
<dbReference type="InterPro" id="IPR036396">
    <property type="entry name" value="Cyt_P450_sf"/>
</dbReference>
<dbReference type="PANTHER" id="PTHR24289">
    <property type="entry name" value="STEROID 17-ALPHA-HYDROXYLASE/17,20 LYASE"/>
    <property type="match status" value="1"/>
</dbReference>
<dbReference type="PANTHER" id="PTHR24289:SF17">
    <property type="entry name" value="STEROID 21-HYDROXYLASE ISOFORM X1"/>
    <property type="match status" value="1"/>
</dbReference>
<dbReference type="Pfam" id="PF00067">
    <property type="entry name" value="p450"/>
    <property type="match status" value="1"/>
</dbReference>
<dbReference type="PRINTS" id="PR00463">
    <property type="entry name" value="EP450I"/>
</dbReference>
<dbReference type="PRINTS" id="PR00385">
    <property type="entry name" value="P450"/>
</dbReference>
<dbReference type="SUPFAM" id="SSF48264">
    <property type="entry name" value="Cytochrome P450"/>
    <property type="match status" value="1"/>
</dbReference>
<dbReference type="PROSITE" id="PS00086">
    <property type="entry name" value="CYTOCHROME_P450"/>
    <property type="match status" value="1"/>
</dbReference>
<reference key="1">
    <citation type="submission" date="2005-12" db="EMBL/GenBank/DDBJ databases">
        <title>Phylogenetic analysis of a steroid 21-hydroxylase gene in some species of animals and a man.</title>
        <authorList>
            <person name="Brzezinska K."/>
            <person name="Kosowska B."/>
            <person name="Dobosz T."/>
            <person name="Moska M."/>
            <person name="Strzala T."/>
            <person name="Marszalek B."/>
        </authorList>
    </citation>
    <scope>NUCLEOTIDE SEQUENCE [GENOMIC DNA]</scope>
    <source>
        <strain>Birman</strain>
    </source>
</reference>
<organism>
    <name type="scientific">Felis catus</name>
    <name type="common">Cat</name>
    <name type="synonym">Felis silvestris catus</name>
    <dbReference type="NCBI Taxonomy" id="9685"/>
    <lineage>
        <taxon>Eukaryota</taxon>
        <taxon>Metazoa</taxon>
        <taxon>Chordata</taxon>
        <taxon>Craniata</taxon>
        <taxon>Vertebrata</taxon>
        <taxon>Euteleostomi</taxon>
        <taxon>Mammalia</taxon>
        <taxon>Eutheria</taxon>
        <taxon>Laurasiatheria</taxon>
        <taxon>Carnivora</taxon>
        <taxon>Feliformia</taxon>
        <taxon>Felidae</taxon>
        <taxon>Felinae</taxon>
        <taxon>Felis</taxon>
    </lineage>
</organism>
<sequence>MLLLGLLLLTALAGARLLWNKWKYRSLHLPPLAPGFLHLLQPDLPIYLLGLTQKLGPVYRLRLGLQDVVVLNSKRTIEEALIRRWVDFAGRPQMPSYKLVSQHYQDLSLGDYSLLWKAHKKLTRSALLLGIRNSMEPLVEQLTQEFCERMRAQAGTPVAIQKEFSFLTCSVICCLTFGDKEDTLVHAFHDCVEDLMKSWEHWSIQVLDIVPFLRFFPNPGLRRLKQALENRDRIVEKQLRQHKDSMVAGQWRDMTDYMLQGMGKPKVEKGHGRLLEGHVHMSVVDLFIGGTETTATTLSWAVAFLLHHPEIQQRLQEELDCELGPGASGSRVPLKDPSRLPLLTATIAEVLRLRPVVPLALPHRTTRHSSILGYDIPEGTVVIPNLQGAHLDDTVWEQPHEFRPDRFLVPGASPRVLAFGCGARVCLGEPLARLELFVVLARLLHAFTLLPPTGPLPSLRPRSHCGINLTMQPFQVRLQPRGAVAPGPSQHQ</sequence>
<name>CP21A_FELCA</name>
<gene>
    <name type="primary">CYP21</name>
</gene>
<accession>Q2LA60</accession>